<sequence length="523" mass="57145">MVLFGVLTMILAIALFSLRIPAIYFNRITIILLLFSALLSYNSLYMNNIGSGVGVFGGLFQVTTITQSIDVFIYLLGALVLLLSEKANRANTLSFNKLNSTLVNKSKGLSVLAEYPLIALFSVLGMSSLISSSDLISMFLSIELQSFAVYILATIYRESESATSAGLKYFLLGSLSSALILLGSSLLYSFTGLTSFEGLYMLCSTTETNTAIEISVLLIMVGLLFKVSAAPFHNWAPDVYDGVPTVVTTWLTTMPKIAFLVFILEFQGFTQLANWSSWTNLLLISSLLSLLIGTIGGLAQYRIKRLLTYSTISHVGFLLLALAINNEESVESFLFYLIQYSLTNINVFFILVAFGYLLGSKGLSIYSPIQLINQLKGQFKVNPLLGLSLAICLFSMAGIPPLVGFFGKQMVLYAATHNGNFFLAFVAILVSVVSAAYYLRIIKVIHFDPVPAPSALSLIKTTEISSDLNVTETNNSLEGSSEELSTSSSLVIATITLLLIFFIINPTPLLNSVHLITLNLFYW</sequence>
<keyword id="KW-0249">Electron transport</keyword>
<keyword id="KW-0472">Membrane</keyword>
<keyword id="KW-0496">Mitochondrion</keyword>
<keyword id="KW-0999">Mitochondrion inner membrane</keyword>
<keyword id="KW-0520">NAD</keyword>
<keyword id="KW-0679">Respiratory chain</keyword>
<keyword id="KW-1278">Translocase</keyword>
<keyword id="KW-0812">Transmembrane</keyword>
<keyword id="KW-1133">Transmembrane helix</keyword>
<keyword id="KW-0813">Transport</keyword>
<keyword id="KW-0830">Ubiquinone</keyword>
<name>NU2M_RHIOR</name>
<geneLocation type="mitochondrion" evidence="4"/>
<protein>
    <recommendedName>
        <fullName evidence="2">NADH-ubiquinone oxidoreductase chain 2</fullName>
        <ecNumber>7.1.1.2</ecNumber>
    </recommendedName>
    <alternativeName>
        <fullName evidence="4">NADH dehydrogenase subunit 2</fullName>
    </alternativeName>
</protein>
<proteinExistence type="inferred from homology"/>
<evidence type="ECO:0000250" key="1">
    <source>
        <dbReference type="UniProtKB" id="P03892"/>
    </source>
</evidence>
<evidence type="ECO:0000250" key="2">
    <source>
        <dbReference type="UniProtKB" id="Q35140"/>
    </source>
</evidence>
<evidence type="ECO:0000255" key="3"/>
<evidence type="ECO:0000312" key="4">
    <source>
        <dbReference type="EMBL" id="AAW49463.1"/>
    </source>
</evidence>
<feature type="chain" id="PRO_0000398813" description="NADH-ubiquinone oxidoreductase chain 2">
    <location>
        <begin position="1"/>
        <end position="523"/>
    </location>
</feature>
<feature type="transmembrane region" description="Helical" evidence="3">
    <location>
        <begin position="3"/>
        <end position="23"/>
    </location>
</feature>
<feature type="transmembrane region" description="Helical" evidence="3">
    <location>
        <begin position="30"/>
        <end position="50"/>
    </location>
</feature>
<feature type="transmembrane region" description="Helical" evidence="3">
    <location>
        <begin position="62"/>
        <end position="82"/>
    </location>
</feature>
<feature type="transmembrane region" description="Helical" evidence="3">
    <location>
        <begin position="110"/>
        <end position="130"/>
    </location>
</feature>
<feature type="transmembrane region" description="Helical" evidence="3">
    <location>
        <begin position="135"/>
        <end position="155"/>
    </location>
</feature>
<feature type="transmembrane region" description="Helical" evidence="3">
    <location>
        <begin position="170"/>
        <end position="190"/>
    </location>
</feature>
<feature type="transmembrane region" description="Helical" evidence="3">
    <location>
        <begin position="212"/>
        <end position="232"/>
    </location>
</feature>
<feature type="transmembrane region" description="Helical" evidence="3">
    <location>
        <begin position="246"/>
        <end position="266"/>
    </location>
</feature>
<feature type="transmembrane region" description="Helical" evidence="3">
    <location>
        <begin position="281"/>
        <end position="301"/>
    </location>
</feature>
<feature type="transmembrane region" description="Helical" evidence="3">
    <location>
        <begin position="306"/>
        <end position="326"/>
    </location>
</feature>
<feature type="transmembrane region" description="Helical" evidence="3">
    <location>
        <begin position="333"/>
        <end position="353"/>
    </location>
</feature>
<feature type="transmembrane region" description="Helical" evidence="3">
    <location>
        <begin position="386"/>
        <end position="406"/>
    </location>
</feature>
<feature type="transmembrane region" description="Helical" evidence="3">
    <location>
        <begin position="419"/>
        <end position="439"/>
    </location>
</feature>
<feature type="transmembrane region" description="Helical" evidence="3">
    <location>
        <begin position="490"/>
        <end position="510"/>
    </location>
</feature>
<organism>
    <name type="scientific">Rhizopus oryzae</name>
    <name type="common">Mucormycosis agent</name>
    <name type="synonym">Rhizopus arrhizus var. delemar</name>
    <dbReference type="NCBI Taxonomy" id="64495"/>
    <lineage>
        <taxon>Eukaryota</taxon>
        <taxon>Fungi</taxon>
        <taxon>Fungi incertae sedis</taxon>
        <taxon>Mucoromycota</taxon>
        <taxon>Mucoromycotina</taxon>
        <taxon>Mucoromycetes</taxon>
        <taxon>Mucorales</taxon>
        <taxon>Mucorineae</taxon>
        <taxon>Rhizopodaceae</taxon>
        <taxon>Rhizopus</taxon>
    </lineage>
</organism>
<reference evidence="4" key="1">
    <citation type="journal article" date="2005" name="Nucleic Acids Res.">
        <title>Comparative mitochondrial genomics in zygomycetes: bacteria-like RNase P RNAs, mobile elements, and a close source of the group I intron invasion in angiosperms.</title>
        <authorList>
            <person name="Seif E."/>
            <person name="Leigh J."/>
            <person name="Liu Y."/>
            <person name="Roewer I."/>
            <person name="Forget L."/>
            <person name="Lang B.F."/>
        </authorList>
    </citation>
    <scope>NUCLEOTIDE SEQUENCE [LARGE SCALE GENOMIC DNA]</scope>
    <source>
        <strain evidence="4">DAOM 148428</strain>
    </source>
</reference>
<accession>Q3T4F3</accession>
<gene>
    <name evidence="2" type="primary">ND2</name>
    <name evidence="4" type="synonym">NAD2</name>
</gene>
<comment type="function">
    <text evidence="2">Core subunit of the mitochondrial membrane respiratory chain NADH dehydrogenase (Complex I) that is believed to belong to the minimal assembly required for catalysis. Complex I functions in the transfer of electrons from NADH to the respiratory chain. The immediate electron acceptor for the enzyme is believed to be ubiquinone (By similarity).</text>
</comment>
<comment type="catalytic activity">
    <reaction>
        <text>a ubiquinone + NADH + 5 H(+)(in) = a ubiquinol + NAD(+) + 4 H(+)(out)</text>
        <dbReference type="Rhea" id="RHEA:29091"/>
        <dbReference type="Rhea" id="RHEA-COMP:9565"/>
        <dbReference type="Rhea" id="RHEA-COMP:9566"/>
        <dbReference type="ChEBI" id="CHEBI:15378"/>
        <dbReference type="ChEBI" id="CHEBI:16389"/>
        <dbReference type="ChEBI" id="CHEBI:17976"/>
        <dbReference type="ChEBI" id="CHEBI:57540"/>
        <dbReference type="ChEBI" id="CHEBI:57945"/>
        <dbReference type="EC" id="7.1.1.2"/>
    </reaction>
</comment>
<comment type="subcellular location">
    <subcellularLocation>
        <location evidence="1">Mitochondrion inner membrane</location>
        <topology evidence="1">Multi-pass membrane protein</topology>
    </subcellularLocation>
</comment>
<comment type="similarity">
    <text evidence="3">Belongs to the complex I subunit 2 family.</text>
</comment>
<dbReference type="EC" id="7.1.1.2"/>
<dbReference type="EMBL" id="AY863212">
    <property type="protein sequence ID" value="AAW49463.1"/>
    <property type="molecule type" value="Genomic_DNA"/>
</dbReference>
<dbReference type="RefSeq" id="YP_203296.1">
    <property type="nucleotide sequence ID" value="NC_006836.1"/>
</dbReference>
<dbReference type="SMR" id="Q3T4F3"/>
<dbReference type="GeneID" id="3260146"/>
<dbReference type="GO" id="GO:0005743">
    <property type="term" value="C:mitochondrial inner membrane"/>
    <property type="evidence" value="ECO:0007669"/>
    <property type="project" value="UniProtKB-SubCell"/>
</dbReference>
<dbReference type="GO" id="GO:0008137">
    <property type="term" value="F:NADH dehydrogenase (ubiquinone) activity"/>
    <property type="evidence" value="ECO:0007669"/>
    <property type="project" value="UniProtKB-EC"/>
</dbReference>
<dbReference type="GO" id="GO:0042773">
    <property type="term" value="P:ATP synthesis coupled electron transport"/>
    <property type="evidence" value="ECO:0007669"/>
    <property type="project" value="InterPro"/>
</dbReference>
<dbReference type="HAMAP" id="MF_00445">
    <property type="entry name" value="NDH1_NuoN_1"/>
    <property type="match status" value="1"/>
</dbReference>
<dbReference type="InterPro" id="IPR010096">
    <property type="entry name" value="NADH-Q_OxRdtase_suN/2"/>
</dbReference>
<dbReference type="InterPro" id="IPR001750">
    <property type="entry name" value="ND/Mrp_TM"/>
</dbReference>
<dbReference type="NCBIfam" id="TIGR01770">
    <property type="entry name" value="NDH_I_N"/>
    <property type="match status" value="1"/>
</dbReference>
<dbReference type="PANTHER" id="PTHR22773">
    <property type="entry name" value="NADH DEHYDROGENASE"/>
    <property type="match status" value="1"/>
</dbReference>
<dbReference type="Pfam" id="PF00361">
    <property type="entry name" value="Proton_antipo_M"/>
    <property type="match status" value="1"/>
</dbReference>